<organism>
    <name type="scientific">Acinetobacter baumannii (strain AYE)</name>
    <dbReference type="NCBI Taxonomy" id="509173"/>
    <lineage>
        <taxon>Bacteria</taxon>
        <taxon>Pseudomonadati</taxon>
        <taxon>Pseudomonadota</taxon>
        <taxon>Gammaproteobacteria</taxon>
        <taxon>Moraxellales</taxon>
        <taxon>Moraxellaceae</taxon>
        <taxon>Acinetobacter</taxon>
        <taxon>Acinetobacter calcoaceticus/baumannii complex</taxon>
    </lineage>
</organism>
<sequence length="261" mass="27763">MQDTPLIIGSRSFQSRLLVGTGKYKDLNETDLAIQASGAEIVTVAIRRVNIGQNPDQPNLLSVIPPEKYTILPNTAGCFDADSAVRTCMLARELLDGHNLVKLEVLGDEKTLYPNVTETLKAARTLIDDGFEIMVYTSDDPIIAQELESMGCVAIMPLGSLIGSGLGILNPHTISIIKENAKVPVLVDAGVGTASDAAIAMELGCDGVLMNTAIAAAQNPILMASAMKKAVEAGREAFLAGRMPRKRMANASSPETGYFFK</sequence>
<proteinExistence type="inferred from homology"/>
<evidence type="ECO:0000255" key="1">
    <source>
        <dbReference type="HAMAP-Rule" id="MF_00443"/>
    </source>
</evidence>
<feature type="chain" id="PRO_1000124593" description="Thiazole synthase">
    <location>
        <begin position="1"/>
        <end position="261"/>
    </location>
</feature>
<feature type="active site" description="Schiff-base intermediate with DXP" evidence="1">
    <location>
        <position position="102"/>
    </location>
</feature>
<feature type="binding site" evidence="1">
    <location>
        <position position="163"/>
    </location>
    <ligand>
        <name>1-deoxy-D-xylulose 5-phosphate</name>
        <dbReference type="ChEBI" id="CHEBI:57792"/>
    </ligand>
</feature>
<feature type="binding site" evidence="1">
    <location>
        <begin position="189"/>
        <end position="190"/>
    </location>
    <ligand>
        <name>1-deoxy-D-xylulose 5-phosphate</name>
        <dbReference type="ChEBI" id="CHEBI:57792"/>
    </ligand>
</feature>
<feature type="binding site" evidence="1">
    <location>
        <begin position="211"/>
        <end position="212"/>
    </location>
    <ligand>
        <name>1-deoxy-D-xylulose 5-phosphate</name>
        <dbReference type="ChEBI" id="CHEBI:57792"/>
    </ligand>
</feature>
<dbReference type="EC" id="2.8.1.10" evidence="1"/>
<dbReference type="EMBL" id="CU459141">
    <property type="protein sequence ID" value="CAM86136.1"/>
    <property type="molecule type" value="Genomic_DNA"/>
</dbReference>
<dbReference type="RefSeq" id="WP_001154366.1">
    <property type="nucleotide sequence ID" value="NZ_JBDGFB010000016.1"/>
</dbReference>
<dbReference type="SMR" id="B0V876"/>
<dbReference type="EnsemblBacteria" id="CAM86136">
    <property type="protein sequence ID" value="CAM86136"/>
    <property type="gene ID" value="ABAYE1214"/>
</dbReference>
<dbReference type="KEGG" id="aby:ABAYE1214"/>
<dbReference type="HOGENOM" id="CLU_062233_1_1_6"/>
<dbReference type="UniPathway" id="UPA00060"/>
<dbReference type="GO" id="GO:0005737">
    <property type="term" value="C:cytoplasm"/>
    <property type="evidence" value="ECO:0007669"/>
    <property type="project" value="UniProtKB-SubCell"/>
</dbReference>
<dbReference type="GO" id="GO:1990107">
    <property type="term" value="F:thiazole synthase activity"/>
    <property type="evidence" value="ECO:0007669"/>
    <property type="project" value="UniProtKB-EC"/>
</dbReference>
<dbReference type="GO" id="GO:0009229">
    <property type="term" value="P:thiamine diphosphate biosynthetic process"/>
    <property type="evidence" value="ECO:0007669"/>
    <property type="project" value="UniProtKB-UniRule"/>
</dbReference>
<dbReference type="CDD" id="cd04728">
    <property type="entry name" value="ThiG"/>
    <property type="match status" value="1"/>
</dbReference>
<dbReference type="Gene3D" id="3.20.20.70">
    <property type="entry name" value="Aldolase class I"/>
    <property type="match status" value="1"/>
</dbReference>
<dbReference type="HAMAP" id="MF_00443">
    <property type="entry name" value="ThiG"/>
    <property type="match status" value="1"/>
</dbReference>
<dbReference type="InterPro" id="IPR013785">
    <property type="entry name" value="Aldolase_TIM"/>
</dbReference>
<dbReference type="InterPro" id="IPR033983">
    <property type="entry name" value="Thiazole_synthase_ThiG"/>
</dbReference>
<dbReference type="InterPro" id="IPR008867">
    <property type="entry name" value="ThiG"/>
</dbReference>
<dbReference type="PANTHER" id="PTHR34266">
    <property type="entry name" value="THIAZOLE SYNTHASE"/>
    <property type="match status" value="1"/>
</dbReference>
<dbReference type="PANTHER" id="PTHR34266:SF2">
    <property type="entry name" value="THIAZOLE SYNTHASE"/>
    <property type="match status" value="1"/>
</dbReference>
<dbReference type="Pfam" id="PF05690">
    <property type="entry name" value="ThiG"/>
    <property type="match status" value="1"/>
</dbReference>
<dbReference type="SUPFAM" id="SSF110399">
    <property type="entry name" value="ThiG-like"/>
    <property type="match status" value="1"/>
</dbReference>
<reference key="1">
    <citation type="journal article" date="2008" name="PLoS ONE">
        <title>Comparative analysis of Acinetobacters: three genomes for three lifestyles.</title>
        <authorList>
            <person name="Vallenet D."/>
            <person name="Nordmann P."/>
            <person name="Barbe V."/>
            <person name="Poirel L."/>
            <person name="Mangenot S."/>
            <person name="Bataille E."/>
            <person name="Dossat C."/>
            <person name="Gas S."/>
            <person name="Kreimeyer A."/>
            <person name="Lenoble P."/>
            <person name="Oztas S."/>
            <person name="Poulain J."/>
            <person name="Segurens B."/>
            <person name="Robert C."/>
            <person name="Abergel C."/>
            <person name="Claverie J.-M."/>
            <person name="Raoult D."/>
            <person name="Medigue C."/>
            <person name="Weissenbach J."/>
            <person name="Cruveiller S."/>
        </authorList>
    </citation>
    <scope>NUCLEOTIDE SEQUENCE [LARGE SCALE GENOMIC DNA]</scope>
    <source>
        <strain>AYE</strain>
    </source>
</reference>
<accession>B0V876</accession>
<keyword id="KW-0963">Cytoplasm</keyword>
<keyword id="KW-0704">Schiff base</keyword>
<keyword id="KW-0784">Thiamine biosynthesis</keyword>
<keyword id="KW-0808">Transferase</keyword>
<gene>
    <name evidence="1" type="primary">thiG</name>
    <name type="ordered locus">ABAYE1214</name>
</gene>
<comment type="function">
    <text evidence="1">Catalyzes the rearrangement of 1-deoxy-D-xylulose 5-phosphate (DXP) to produce the thiazole phosphate moiety of thiamine. Sulfur is provided by the thiocarboxylate moiety of the carrier protein ThiS. In vitro, sulfur can be provided by H(2)S.</text>
</comment>
<comment type="catalytic activity">
    <reaction evidence="1">
        <text>[ThiS sulfur-carrier protein]-C-terminal-Gly-aminoethanethioate + 2-iminoacetate + 1-deoxy-D-xylulose 5-phosphate = [ThiS sulfur-carrier protein]-C-terminal Gly-Gly + 2-[(2R,5Z)-2-carboxy-4-methylthiazol-5(2H)-ylidene]ethyl phosphate + 2 H2O + H(+)</text>
        <dbReference type="Rhea" id="RHEA:26297"/>
        <dbReference type="Rhea" id="RHEA-COMP:12909"/>
        <dbReference type="Rhea" id="RHEA-COMP:19908"/>
        <dbReference type="ChEBI" id="CHEBI:15377"/>
        <dbReference type="ChEBI" id="CHEBI:15378"/>
        <dbReference type="ChEBI" id="CHEBI:57792"/>
        <dbReference type="ChEBI" id="CHEBI:62899"/>
        <dbReference type="ChEBI" id="CHEBI:77846"/>
        <dbReference type="ChEBI" id="CHEBI:90778"/>
        <dbReference type="ChEBI" id="CHEBI:232372"/>
        <dbReference type="EC" id="2.8.1.10"/>
    </reaction>
</comment>
<comment type="pathway">
    <text evidence="1">Cofactor biosynthesis; thiamine diphosphate biosynthesis.</text>
</comment>
<comment type="subunit">
    <text evidence="1">Homotetramer. Forms heterodimers with either ThiH or ThiS.</text>
</comment>
<comment type="subcellular location">
    <subcellularLocation>
        <location evidence="1">Cytoplasm</location>
    </subcellularLocation>
</comment>
<comment type="similarity">
    <text evidence="1">Belongs to the ThiG family.</text>
</comment>
<protein>
    <recommendedName>
        <fullName evidence="1">Thiazole synthase</fullName>
        <ecNumber evidence="1">2.8.1.10</ecNumber>
    </recommendedName>
</protein>
<name>THIG_ACIBY</name>